<feature type="chain" id="PRO_0000101339" description="Uncharacterized protein RP240">
    <location>
        <begin position="1"/>
        <end position="107"/>
    </location>
</feature>
<feature type="region of interest" description="Disordered" evidence="1">
    <location>
        <begin position="86"/>
        <end position="107"/>
    </location>
</feature>
<feature type="compositionally biased region" description="Acidic residues" evidence="1">
    <location>
        <begin position="92"/>
        <end position="107"/>
    </location>
</feature>
<accession>Q9ZDT5</accession>
<evidence type="ECO:0000256" key="1">
    <source>
        <dbReference type="SAM" id="MobiDB-lite"/>
    </source>
</evidence>
<gene>
    <name type="ordered locus">RP240</name>
</gene>
<name>Y240_RICPR</name>
<organism>
    <name type="scientific">Rickettsia prowazekii (strain Madrid E)</name>
    <dbReference type="NCBI Taxonomy" id="272947"/>
    <lineage>
        <taxon>Bacteria</taxon>
        <taxon>Pseudomonadati</taxon>
        <taxon>Pseudomonadota</taxon>
        <taxon>Alphaproteobacteria</taxon>
        <taxon>Rickettsiales</taxon>
        <taxon>Rickettsiaceae</taxon>
        <taxon>Rickettsieae</taxon>
        <taxon>Rickettsia</taxon>
        <taxon>typhus group</taxon>
    </lineage>
</organism>
<protein>
    <recommendedName>
        <fullName>Uncharacterized protein RP240</fullName>
    </recommendedName>
</protein>
<keyword id="KW-1185">Reference proteome</keyword>
<dbReference type="EMBL" id="AJ235271">
    <property type="protein sequence ID" value="CAA14702.1"/>
    <property type="molecule type" value="Genomic_DNA"/>
</dbReference>
<dbReference type="PIR" id="D71678">
    <property type="entry name" value="D71678"/>
</dbReference>
<dbReference type="RefSeq" id="NP_220625.1">
    <property type="nucleotide sequence ID" value="NC_000963.1"/>
</dbReference>
<dbReference type="RefSeq" id="WP_004596053.1">
    <property type="nucleotide sequence ID" value="NC_000963.1"/>
</dbReference>
<dbReference type="SMR" id="Q9ZDT5"/>
<dbReference type="STRING" id="272947.gene:17555321"/>
<dbReference type="EnsemblBacteria" id="CAA14702">
    <property type="protein sequence ID" value="CAA14702"/>
    <property type="gene ID" value="CAA14702"/>
</dbReference>
<dbReference type="KEGG" id="rpr:RP240"/>
<dbReference type="PATRIC" id="fig|272947.5.peg.247"/>
<dbReference type="eggNOG" id="ENOG5032Y4S">
    <property type="taxonomic scope" value="Bacteria"/>
</dbReference>
<dbReference type="HOGENOM" id="CLU_175587_0_0_5"/>
<dbReference type="OrthoDB" id="7165659at2"/>
<dbReference type="Proteomes" id="UP000002480">
    <property type="component" value="Chromosome"/>
</dbReference>
<dbReference type="InterPro" id="IPR021277">
    <property type="entry name" value="DUF2610"/>
</dbReference>
<dbReference type="Pfam" id="PF11020">
    <property type="entry name" value="DUF2610"/>
    <property type="match status" value="1"/>
</dbReference>
<proteinExistence type="predicted"/>
<sequence>MAHYKEFEFDCDFGGQRAKFKFYIGTPQEGHHPLQFQAKWLSDERGGTIPDEVMKAISQLNDLAKKNSVPLPDLCVYALGSAQETQVSNHEEDADVLETQDDNAEQV</sequence>
<reference key="1">
    <citation type="journal article" date="1998" name="Nature">
        <title>The genome sequence of Rickettsia prowazekii and the origin of mitochondria.</title>
        <authorList>
            <person name="Andersson S.G.E."/>
            <person name="Zomorodipour A."/>
            <person name="Andersson J.O."/>
            <person name="Sicheritz-Ponten T."/>
            <person name="Alsmark U.C.M."/>
            <person name="Podowski R.M."/>
            <person name="Naeslund A.K."/>
            <person name="Eriksson A.-S."/>
            <person name="Winkler H.H."/>
            <person name="Kurland C.G."/>
        </authorList>
    </citation>
    <scope>NUCLEOTIDE SEQUENCE [LARGE SCALE GENOMIC DNA]</scope>
    <source>
        <strain>Madrid E</strain>
    </source>
</reference>